<feature type="chain" id="PRO_1000201464" description="Elongation factor G">
    <location>
        <begin position="1"/>
        <end position="704"/>
    </location>
</feature>
<feature type="domain" description="tr-type G">
    <location>
        <begin position="8"/>
        <end position="290"/>
    </location>
</feature>
<feature type="binding site" evidence="2">
    <location>
        <begin position="17"/>
        <end position="24"/>
    </location>
    <ligand>
        <name>GTP</name>
        <dbReference type="ChEBI" id="CHEBI:37565"/>
    </ligand>
</feature>
<feature type="binding site" evidence="2">
    <location>
        <begin position="88"/>
        <end position="92"/>
    </location>
    <ligand>
        <name>GTP</name>
        <dbReference type="ChEBI" id="CHEBI:37565"/>
    </ligand>
</feature>
<feature type="binding site" evidence="2">
    <location>
        <begin position="142"/>
        <end position="145"/>
    </location>
    <ligand>
        <name>GTP</name>
        <dbReference type="ChEBI" id="CHEBI:37565"/>
    </ligand>
</feature>
<feature type="modified residue" description="N6-acetyllysine" evidence="1">
    <location>
        <position position="504"/>
    </location>
</feature>
<feature type="modified residue" description="N6-acetyllysine" evidence="1">
    <location>
        <position position="643"/>
    </location>
</feature>
<proteinExistence type="inferred from homology"/>
<reference key="1">
    <citation type="journal article" date="2009" name="PLoS Genet.">
        <title>Organised genome dynamics in the Escherichia coli species results in highly diverse adaptive paths.</title>
        <authorList>
            <person name="Touchon M."/>
            <person name="Hoede C."/>
            <person name="Tenaillon O."/>
            <person name="Barbe V."/>
            <person name="Baeriswyl S."/>
            <person name="Bidet P."/>
            <person name="Bingen E."/>
            <person name="Bonacorsi S."/>
            <person name="Bouchier C."/>
            <person name="Bouvet O."/>
            <person name="Calteau A."/>
            <person name="Chiapello H."/>
            <person name="Clermont O."/>
            <person name="Cruveiller S."/>
            <person name="Danchin A."/>
            <person name="Diard M."/>
            <person name="Dossat C."/>
            <person name="Karoui M.E."/>
            <person name="Frapy E."/>
            <person name="Garry L."/>
            <person name="Ghigo J.M."/>
            <person name="Gilles A.M."/>
            <person name="Johnson J."/>
            <person name="Le Bouguenec C."/>
            <person name="Lescat M."/>
            <person name="Mangenot S."/>
            <person name="Martinez-Jehanne V."/>
            <person name="Matic I."/>
            <person name="Nassif X."/>
            <person name="Oztas S."/>
            <person name="Petit M.A."/>
            <person name="Pichon C."/>
            <person name="Rouy Z."/>
            <person name="Ruf C.S."/>
            <person name="Schneider D."/>
            <person name="Tourret J."/>
            <person name="Vacherie B."/>
            <person name="Vallenet D."/>
            <person name="Medigue C."/>
            <person name="Rocha E.P.C."/>
            <person name="Denamur E."/>
        </authorList>
    </citation>
    <scope>NUCLEOTIDE SEQUENCE [LARGE SCALE GENOMIC DNA]</scope>
    <source>
        <strain>ED1a</strain>
    </source>
</reference>
<evidence type="ECO:0000250" key="1"/>
<evidence type="ECO:0000255" key="2">
    <source>
        <dbReference type="HAMAP-Rule" id="MF_00054"/>
    </source>
</evidence>
<comment type="function">
    <text evidence="2">Catalyzes the GTP-dependent ribosomal translocation step during translation elongation. During this step, the ribosome changes from the pre-translocational (PRE) to the post-translocational (POST) state as the newly formed A-site-bound peptidyl-tRNA and P-site-bound deacylated tRNA move to the P and E sites, respectively. Catalyzes the coordinated movement of the two tRNA molecules, the mRNA and conformational changes in the ribosome.</text>
</comment>
<comment type="subcellular location">
    <subcellularLocation>
        <location evidence="2">Cytoplasm</location>
    </subcellularLocation>
</comment>
<comment type="similarity">
    <text evidence="2">Belongs to the TRAFAC class translation factor GTPase superfamily. Classic translation factor GTPase family. EF-G/EF-2 subfamily.</text>
</comment>
<accession>B7N0X6</accession>
<sequence>MARTTPIARYRNIGISAHIDAGKTTTTERILFYTGVNHKIGEVHDGAATMDWMEQEQERGITITSAATTAFWSGMAKQYEPHRINIIDTPGHVDFTIEVERSMRVLDGAVMVYCAVGGVQPQSETVWRQANKYKVPRIAFVNKMDRMGANFLKVVNQIKTRLGANPVPLQLAIGAEEHFTGVVDLVKMKAINWNDADQGVTFEYEDIPADMVELANEWHQNLIESAAEASEELMEKYLGGEELTEAEIKGALRQRVLNNEIILVTCGSAFKNKGVQAMLDAVIDYLPSPVDVPAINGILDDGKDTPAERHASDDEPFSALAFKIATDPFVGNLTFFRVYSGVVNSGDTVLNSVKAARERFGRIVQMHANKREEIKEVRAGDIAAAIGLKDVTTGDTLCDPDAPIILERMEFPEPVISIAVEPKTKADQEKMGLALGRLAKEDPSFRVWTDEESNQTIIAGMGELHLDIIVDRMKREFNVEANVGKPQVAYRETIRQKVTDVEGKHAKQSGGRGQYGHVVIDMYPLEPGSNPKGYEFINDIKGGVIPGEYIPAVDKGIQEQLKAGPLAGYPVVDMGIRLHFGSYHDVDSSELAFKLAASIAFKEGFKKAKPVLLEPIMKVEVETPEENTGDVIGDLSRRRGMLKGQESEVTGVKIHAEVPLSEMFGYATQLRSLTKGRASYTMEFLKYDEAPSNVAQAVIEARGK</sequence>
<organism>
    <name type="scientific">Escherichia coli O81 (strain ED1a)</name>
    <dbReference type="NCBI Taxonomy" id="585397"/>
    <lineage>
        <taxon>Bacteria</taxon>
        <taxon>Pseudomonadati</taxon>
        <taxon>Pseudomonadota</taxon>
        <taxon>Gammaproteobacteria</taxon>
        <taxon>Enterobacterales</taxon>
        <taxon>Enterobacteriaceae</taxon>
        <taxon>Escherichia</taxon>
    </lineage>
</organism>
<keyword id="KW-0007">Acetylation</keyword>
<keyword id="KW-0963">Cytoplasm</keyword>
<keyword id="KW-0251">Elongation factor</keyword>
<keyword id="KW-0342">GTP-binding</keyword>
<keyword id="KW-0547">Nucleotide-binding</keyword>
<keyword id="KW-0648">Protein biosynthesis</keyword>
<name>EFG_ECO81</name>
<protein>
    <recommendedName>
        <fullName evidence="2">Elongation factor G</fullName>
        <shortName evidence="2">EF-G</shortName>
    </recommendedName>
</protein>
<dbReference type="EMBL" id="CU928162">
    <property type="protein sequence ID" value="CAR09994.1"/>
    <property type="molecule type" value="Genomic_DNA"/>
</dbReference>
<dbReference type="RefSeq" id="WP_000124700.1">
    <property type="nucleotide sequence ID" value="NC_011745.1"/>
</dbReference>
<dbReference type="SMR" id="B7N0X6"/>
<dbReference type="GeneID" id="93778658"/>
<dbReference type="KEGG" id="ecq:ECED1_4000"/>
<dbReference type="HOGENOM" id="CLU_002794_4_1_6"/>
<dbReference type="Proteomes" id="UP000000748">
    <property type="component" value="Chromosome"/>
</dbReference>
<dbReference type="GO" id="GO:0005737">
    <property type="term" value="C:cytoplasm"/>
    <property type="evidence" value="ECO:0007669"/>
    <property type="project" value="UniProtKB-SubCell"/>
</dbReference>
<dbReference type="GO" id="GO:0005525">
    <property type="term" value="F:GTP binding"/>
    <property type="evidence" value="ECO:0007669"/>
    <property type="project" value="UniProtKB-UniRule"/>
</dbReference>
<dbReference type="GO" id="GO:0003924">
    <property type="term" value="F:GTPase activity"/>
    <property type="evidence" value="ECO:0007669"/>
    <property type="project" value="InterPro"/>
</dbReference>
<dbReference type="GO" id="GO:0097216">
    <property type="term" value="F:guanosine tetraphosphate binding"/>
    <property type="evidence" value="ECO:0007669"/>
    <property type="project" value="UniProtKB-ARBA"/>
</dbReference>
<dbReference type="GO" id="GO:0003746">
    <property type="term" value="F:translation elongation factor activity"/>
    <property type="evidence" value="ECO:0007669"/>
    <property type="project" value="UniProtKB-UniRule"/>
</dbReference>
<dbReference type="GO" id="GO:0032790">
    <property type="term" value="P:ribosome disassembly"/>
    <property type="evidence" value="ECO:0007669"/>
    <property type="project" value="TreeGrafter"/>
</dbReference>
<dbReference type="CDD" id="cd01886">
    <property type="entry name" value="EF-G"/>
    <property type="match status" value="1"/>
</dbReference>
<dbReference type="CDD" id="cd16262">
    <property type="entry name" value="EFG_III"/>
    <property type="match status" value="1"/>
</dbReference>
<dbReference type="CDD" id="cd01434">
    <property type="entry name" value="EFG_mtEFG1_IV"/>
    <property type="match status" value="1"/>
</dbReference>
<dbReference type="CDD" id="cd03713">
    <property type="entry name" value="EFG_mtEFG_C"/>
    <property type="match status" value="1"/>
</dbReference>
<dbReference type="CDD" id="cd04088">
    <property type="entry name" value="EFG_mtEFG_II"/>
    <property type="match status" value="1"/>
</dbReference>
<dbReference type="FunFam" id="2.40.30.10:FF:000006">
    <property type="entry name" value="Elongation factor G"/>
    <property type="match status" value="1"/>
</dbReference>
<dbReference type="FunFam" id="3.30.230.10:FF:000003">
    <property type="entry name" value="Elongation factor G"/>
    <property type="match status" value="1"/>
</dbReference>
<dbReference type="FunFam" id="3.30.70.240:FF:000001">
    <property type="entry name" value="Elongation factor G"/>
    <property type="match status" value="1"/>
</dbReference>
<dbReference type="FunFam" id="3.30.70.870:FF:000001">
    <property type="entry name" value="Elongation factor G"/>
    <property type="match status" value="1"/>
</dbReference>
<dbReference type="FunFam" id="3.40.50.300:FF:000029">
    <property type="entry name" value="Elongation factor G"/>
    <property type="match status" value="1"/>
</dbReference>
<dbReference type="Gene3D" id="3.30.230.10">
    <property type="match status" value="1"/>
</dbReference>
<dbReference type="Gene3D" id="3.30.70.240">
    <property type="match status" value="1"/>
</dbReference>
<dbReference type="Gene3D" id="3.30.70.870">
    <property type="entry name" value="Elongation Factor G (Translational Gtpase), domain 3"/>
    <property type="match status" value="1"/>
</dbReference>
<dbReference type="Gene3D" id="3.40.50.300">
    <property type="entry name" value="P-loop containing nucleotide triphosphate hydrolases"/>
    <property type="match status" value="1"/>
</dbReference>
<dbReference type="Gene3D" id="2.40.30.10">
    <property type="entry name" value="Translation factors"/>
    <property type="match status" value="1"/>
</dbReference>
<dbReference type="HAMAP" id="MF_00054_B">
    <property type="entry name" value="EF_G_EF_2_B"/>
    <property type="match status" value="1"/>
</dbReference>
<dbReference type="InterPro" id="IPR041095">
    <property type="entry name" value="EFG_II"/>
</dbReference>
<dbReference type="InterPro" id="IPR009022">
    <property type="entry name" value="EFG_III"/>
</dbReference>
<dbReference type="InterPro" id="IPR035647">
    <property type="entry name" value="EFG_III/V"/>
</dbReference>
<dbReference type="InterPro" id="IPR047872">
    <property type="entry name" value="EFG_IV"/>
</dbReference>
<dbReference type="InterPro" id="IPR035649">
    <property type="entry name" value="EFG_V"/>
</dbReference>
<dbReference type="InterPro" id="IPR000640">
    <property type="entry name" value="EFG_V-like"/>
</dbReference>
<dbReference type="InterPro" id="IPR004161">
    <property type="entry name" value="EFTu-like_2"/>
</dbReference>
<dbReference type="InterPro" id="IPR031157">
    <property type="entry name" value="G_TR_CS"/>
</dbReference>
<dbReference type="InterPro" id="IPR027417">
    <property type="entry name" value="P-loop_NTPase"/>
</dbReference>
<dbReference type="InterPro" id="IPR020568">
    <property type="entry name" value="Ribosomal_Su5_D2-typ_SF"/>
</dbReference>
<dbReference type="InterPro" id="IPR014721">
    <property type="entry name" value="Ribsml_uS5_D2-typ_fold_subgr"/>
</dbReference>
<dbReference type="InterPro" id="IPR005225">
    <property type="entry name" value="Small_GTP-bd"/>
</dbReference>
<dbReference type="InterPro" id="IPR000795">
    <property type="entry name" value="T_Tr_GTP-bd_dom"/>
</dbReference>
<dbReference type="InterPro" id="IPR009000">
    <property type="entry name" value="Transl_B-barrel_sf"/>
</dbReference>
<dbReference type="InterPro" id="IPR004540">
    <property type="entry name" value="Transl_elong_EFG/EF2"/>
</dbReference>
<dbReference type="InterPro" id="IPR005517">
    <property type="entry name" value="Transl_elong_EFG/EF2_IV"/>
</dbReference>
<dbReference type="NCBIfam" id="TIGR00484">
    <property type="entry name" value="EF-G"/>
    <property type="match status" value="1"/>
</dbReference>
<dbReference type="NCBIfam" id="NF009381">
    <property type="entry name" value="PRK12740.1-5"/>
    <property type="match status" value="1"/>
</dbReference>
<dbReference type="NCBIfam" id="TIGR00231">
    <property type="entry name" value="small_GTP"/>
    <property type="match status" value="1"/>
</dbReference>
<dbReference type="PANTHER" id="PTHR43261:SF1">
    <property type="entry name" value="RIBOSOME-RELEASING FACTOR 2, MITOCHONDRIAL"/>
    <property type="match status" value="1"/>
</dbReference>
<dbReference type="PANTHER" id="PTHR43261">
    <property type="entry name" value="TRANSLATION ELONGATION FACTOR G-RELATED"/>
    <property type="match status" value="1"/>
</dbReference>
<dbReference type="Pfam" id="PF00679">
    <property type="entry name" value="EFG_C"/>
    <property type="match status" value="1"/>
</dbReference>
<dbReference type="Pfam" id="PF14492">
    <property type="entry name" value="EFG_III"/>
    <property type="match status" value="1"/>
</dbReference>
<dbReference type="Pfam" id="PF03764">
    <property type="entry name" value="EFG_IV"/>
    <property type="match status" value="1"/>
</dbReference>
<dbReference type="Pfam" id="PF00009">
    <property type="entry name" value="GTP_EFTU"/>
    <property type="match status" value="1"/>
</dbReference>
<dbReference type="Pfam" id="PF03144">
    <property type="entry name" value="GTP_EFTU_D2"/>
    <property type="match status" value="1"/>
</dbReference>
<dbReference type="PRINTS" id="PR00315">
    <property type="entry name" value="ELONGATNFCT"/>
</dbReference>
<dbReference type="SMART" id="SM00838">
    <property type="entry name" value="EFG_C"/>
    <property type="match status" value="1"/>
</dbReference>
<dbReference type="SMART" id="SM00889">
    <property type="entry name" value="EFG_IV"/>
    <property type="match status" value="1"/>
</dbReference>
<dbReference type="SUPFAM" id="SSF54980">
    <property type="entry name" value="EF-G C-terminal domain-like"/>
    <property type="match status" value="2"/>
</dbReference>
<dbReference type="SUPFAM" id="SSF52540">
    <property type="entry name" value="P-loop containing nucleoside triphosphate hydrolases"/>
    <property type="match status" value="1"/>
</dbReference>
<dbReference type="SUPFAM" id="SSF54211">
    <property type="entry name" value="Ribosomal protein S5 domain 2-like"/>
    <property type="match status" value="1"/>
</dbReference>
<dbReference type="SUPFAM" id="SSF50447">
    <property type="entry name" value="Translation proteins"/>
    <property type="match status" value="1"/>
</dbReference>
<dbReference type="PROSITE" id="PS00301">
    <property type="entry name" value="G_TR_1"/>
    <property type="match status" value="1"/>
</dbReference>
<dbReference type="PROSITE" id="PS51722">
    <property type="entry name" value="G_TR_2"/>
    <property type="match status" value="1"/>
</dbReference>
<gene>
    <name evidence="2" type="primary">fusA</name>
    <name type="ordered locus">ECED1_4000</name>
</gene>